<accession>Q2FVN3</accession>
<accession>A0JBY0</accession>
<protein>
    <recommendedName>
        <fullName>HTH-type transcriptional regulator SarZ</fullName>
    </recommendedName>
    <alternativeName>
        <fullName>Staphylococcal accessory regulator Z</fullName>
    </alternativeName>
</protein>
<proteinExistence type="evidence at protein level"/>
<feature type="chain" id="PRO_0000284461" description="HTH-type transcriptional regulator SarZ">
    <location>
        <begin position="1"/>
        <end position="148"/>
    </location>
</feature>
<feature type="domain" description="HTH marR-type" evidence="1">
    <location>
        <begin position="9"/>
        <end position="139"/>
    </location>
</feature>
<feature type="DNA-binding region" description="H-T-H motif" evidence="1">
    <location>
        <begin position="55"/>
        <end position="78"/>
    </location>
</feature>
<feature type="mutagenesis site" description="Reduced DNA binding activity, hemolysin production and virulence in silkworm-infection model." evidence="2">
    <original>F</original>
    <variation>A</variation>
    <location>
        <position position="14"/>
    </location>
</feature>
<feature type="mutagenesis site" description="Reduced DNA binding activity, hemolysin production and virulence in silkworm-infection model." evidence="2">
    <original>K</original>
    <variation>A</variation>
    <location>
        <position position="25"/>
    </location>
</feature>
<feature type="mutagenesis site" description="Reduced DNA binding activity and hemolysin production." evidence="2">
    <original>V</original>
    <variation>M</variation>
    <location>
        <position position="43"/>
    </location>
</feature>
<feature type="mutagenesis site" description="Reduced DNA binding activity, hemolysin production and virulence in silkworm-infection model." evidence="2">
    <original>G</original>
    <variation>E</variation>
    <location>
        <position position="67"/>
    </location>
</feature>
<feature type="mutagenesis site" description="Reduced DNA binding activity, hemolysin production and virulence in silkworm-infection model." evidence="2">
    <original>T</original>
    <variation>A</variation>
    <location>
        <position position="70"/>
    </location>
</feature>
<feature type="mutagenesis site" description="No effect." evidence="2">
    <original>V</original>
    <variation>M</variation>
    <location>
        <position position="82"/>
    </location>
</feature>
<feature type="mutagenesis site" description="Reduced DNA binding activity, hemolysin production and virulence in silkworm-infection model." evidence="2">
    <original>R</original>
    <variation>C</variation>
    <location>
        <position position="92"/>
    </location>
</feature>
<feature type="mutagenesis site" description="Reduced DNA binding activity, hemolysin production and virulence in silkworm-infection model." evidence="2">
    <original>I</original>
    <variation>A</variation>
    <location>
        <position position="96"/>
    </location>
</feature>
<feature type="mutagenesis site" description="No effect." evidence="2">
    <original>K</original>
    <variation>A</variation>
    <location>
        <position position="103"/>
    </location>
</feature>
<feature type="mutagenesis site" description="No effect." evidence="2">
    <original>E</original>
    <variation>A</variation>
    <location>
        <position position="124"/>
    </location>
</feature>
<feature type="mutagenesis site" description="No effect." evidence="2">
    <original>L</original>
    <variation>A</variation>
    <location>
        <position position="134"/>
    </location>
</feature>
<feature type="mutagenesis site" description="No effect." evidence="2">
    <original>K</original>
    <variation>A</variation>
    <location>
        <position position="140"/>
    </location>
</feature>
<comment type="function">
    <text evidence="2">Activates transcription of virulence factors alpha- and beta hemolysin genes (hla and hlb). Also, activates RNAIII expression, a central regulator transcribed from the agr locus.</text>
</comment>
<comment type="subcellular location">
    <subcellularLocation>
        <location evidence="3">Cytoplasm</location>
    </subcellularLocation>
</comment>
<comment type="induction">
    <text evidence="2">Transcriptionally activated by CvfA.</text>
</comment>
<comment type="similarity">
    <text evidence="3">Belongs to the SarZ family.</text>
</comment>
<sequence length="148" mass="17435">MYVENSYLSKQLCFLFYVSSKEIIKKYTNYLKEYDLTYTGYIVLMAIENDEKLNIKKLGERVFLDSGTLTPLLKKLEKKDYVVRTREEKDERNLQISLTEQGKAIKSPLAEISVKVFNEFNISEREASDIINNLRNFVSKNFDYSDKK</sequence>
<name>SARZ_STAA8</name>
<reference key="1">
    <citation type="journal article" date="2006" name="Mol. Microbiol.">
        <title>Novel DNA binding protein SarZ contributes to virulence in Staphylococcus aureus.</title>
        <authorList>
            <person name="Kaito C."/>
            <person name="Morishita D."/>
            <person name="Matsumoto Y."/>
            <person name="Kurokawa K."/>
            <person name="Sekimizu K."/>
        </authorList>
    </citation>
    <scope>NUCLEOTIDE SEQUENCE [GENOMIC DNA]</scope>
    <scope>FUNCTION</scope>
    <scope>INDUCTION</scope>
    <scope>MUTAGENESIS OF PHE-14; LYS-25; VAL-43; GLY-67; THR-70; VAL-82; ARG-92; ILE-96; LYS-103; GLU-124; LEU-134 AND LYS-140</scope>
</reference>
<reference key="2">
    <citation type="book" date="2006" name="Gram positive pathogens, 2nd edition">
        <title>The Staphylococcus aureus NCTC 8325 genome.</title>
        <editorList>
            <person name="Fischetti V."/>
            <person name="Novick R."/>
            <person name="Ferretti J."/>
            <person name="Portnoy D."/>
            <person name="Rood J."/>
        </editorList>
        <authorList>
            <person name="Gillaspy A.F."/>
            <person name="Worrell V."/>
            <person name="Orvis J."/>
            <person name="Roe B.A."/>
            <person name="Dyer D.W."/>
            <person name="Iandolo J.J."/>
        </authorList>
    </citation>
    <scope>NUCLEOTIDE SEQUENCE [LARGE SCALE GENOMIC DNA]</scope>
    <source>
        <strain>NCTC 8325 / PS 47</strain>
    </source>
</reference>
<keyword id="KW-0010">Activator</keyword>
<keyword id="KW-0963">Cytoplasm</keyword>
<keyword id="KW-0238">DNA-binding</keyword>
<keyword id="KW-1185">Reference proteome</keyword>
<keyword id="KW-0804">Transcription</keyword>
<keyword id="KW-0805">Transcription regulation</keyword>
<keyword id="KW-0843">Virulence</keyword>
<evidence type="ECO:0000255" key="1">
    <source>
        <dbReference type="PROSITE-ProRule" id="PRU00345"/>
    </source>
</evidence>
<evidence type="ECO:0000269" key="2">
    <source>
    </source>
</evidence>
<evidence type="ECO:0000305" key="3"/>
<gene>
    <name type="primary">sarZ</name>
    <name type="ordered locus">SAOUHSC_02669</name>
</gene>
<organism>
    <name type="scientific">Staphylococcus aureus (strain NCTC 8325 / PS 47)</name>
    <dbReference type="NCBI Taxonomy" id="93061"/>
    <lineage>
        <taxon>Bacteria</taxon>
        <taxon>Bacillati</taxon>
        <taxon>Bacillota</taxon>
        <taxon>Bacilli</taxon>
        <taxon>Bacillales</taxon>
        <taxon>Staphylococcaceae</taxon>
        <taxon>Staphylococcus</taxon>
    </lineage>
</organism>
<dbReference type="EMBL" id="AB251456">
    <property type="protein sequence ID" value="BAF36712.1"/>
    <property type="molecule type" value="Genomic_DNA"/>
</dbReference>
<dbReference type="EMBL" id="CP000253">
    <property type="protein sequence ID" value="ABD31677.1"/>
    <property type="molecule type" value="Genomic_DNA"/>
</dbReference>
<dbReference type="RefSeq" id="WP_000289213.1">
    <property type="nucleotide sequence ID" value="NZ_LS483365.1"/>
</dbReference>
<dbReference type="RefSeq" id="YP_501131.1">
    <property type="nucleotide sequence ID" value="NC_007795.1"/>
</dbReference>
<dbReference type="SMR" id="Q2FVN3"/>
<dbReference type="STRING" id="93061.SAOUHSC_02669"/>
<dbReference type="PaxDb" id="1280-SAXN108_2640"/>
<dbReference type="GeneID" id="3921231"/>
<dbReference type="KEGG" id="sao:SAOUHSC_02669"/>
<dbReference type="PATRIC" id="fig|93061.5.peg.2415"/>
<dbReference type="eggNOG" id="COG1846">
    <property type="taxonomic scope" value="Bacteria"/>
</dbReference>
<dbReference type="HOGENOM" id="CLU_083287_3_2_9"/>
<dbReference type="OrthoDB" id="9806864at2"/>
<dbReference type="PRO" id="PR:Q2FVN3"/>
<dbReference type="Proteomes" id="UP000008816">
    <property type="component" value="Chromosome"/>
</dbReference>
<dbReference type="GO" id="GO:0005737">
    <property type="term" value="C:cytoplasm"/>
    <property type="evidence" value="ECO:0007669"/>
    <property type="project" value="UniProtKB-SubCell"/>
</dbReference>
<dbReference type="GO" id="GO:0003677">
    <property type="term" value="F:DNA binding"/>
    <property type="evidence" value="ECO:0007669"/>
    <property type="project" value="UniProtKB-KW"/>
</dbReference>
<dbReference type="GO" id="GO:0003700">
    <property type="term" value="F:DNA-binding transcription factor activity"/>
    <property type="evidence" value="ECO:0007669"/>
    <property type="project" value="InterPro"/>
</dbReference>
<dbReference type="GO" id="GO:0006355">
    <property type="term" value="P:regulation of DNA-templated transcription"/>
    <property type="evidence" value="ECO:0000318"/>
    <property type="project" value="GO_Central"/>
</dbReference>
<dbReference type="GO" id="GO:0006950">
    <property type="term" value="P:response to stress"/>
    <property type="evidence" value="ECO:0000318"/>
    <property type="project" value="GO_Central"/>
</dbReference>
<dbReference type="FunFam" id="1.10.10.10:FF:000163">
    <property type="entry name" value="MarR family transcriptional regulator"/>
    <property type="match status" value="1"/>
</dbReference>
<dbReference type="Gene3D" id="1.10.10.10">
    <property type="entry name" value="Winged helix-like DNA-binding domain superfamily/Winged helix DNA-binding domain"/>
    <property type="match status" value="1"/>
</dbReference>
<dbReference type="InterPro" id="IPR000835">
    <property type="entry name" value="HTH_MarR-typ"/>
</dbReference>
<dbReference type="InterPro" id="IPR055166">
    <property type="entry name" value="Transc_reg_Sar_Rot_HTH"/>
</dbReference>
<dbReference type="InterPro" id="IPR036388">
    <property type="entry name" value="WH-like_DNA-bd_sf"/>
</dbReference>
<dbReference type="InterPro" id="IPR036390">
    <property type="entry name" value="WH_DNA-bd_sf"/>
</dbReference>
<dbReference type="PANTHER" id="PTHR42756">
    <property type="entry name" value="TRANSCRIPTIONAL REGULATOR, MARR"/>
    <property type="match status" value="1"/>
</dbReference>
<dbReference type="PANTHER" id="PTHR42756:SF1">
    <property type="entry name" value="TRANSCRIPTIONAL REPRESSOR OF EMRAB OPERON"/>
    <property type="match status" value="1"/>
</dbReference>
<dbReference type="Pfam" id="PF22381">
    <property type="entry name" value="Staph_reg_Sar_Rot"/>
    <property type="match status" value="1"/>
</dbReference>
<dbReference type="PRINTS" id="PR00598">
    <property type="entry name" value="HTHMARR"/>
</dbReference>
<dbReference type="SMART" id="SM00347">
    <property type="entry name" value="HTH_MARR"/>
    <property type="match status" value="1"/>
</dbReference>
<dbReference type="SUPFAM" id="SSF46785">
    <property type="entry name" value="Winged helix' DNA-binding domain"/>
    <property type="match status" value="1"/>
</dbReference>
<dbReference type="PROSITE" id="PS50995">
    <property type="entry name" value="HTH_MARR_2"/>
    <property type="match status" value="1"/>
</dbReference>